<evidence type="ECO:0000255" key="1">
    <source>
        <dbReference type="HAMAP-Rule" id="MF_00405"/>
    </source>
</evidence>
<accession>Q883Y6</accession>
<reference key="1">
    <citation type="journal article" date="2003" name="Proc. Natl. Acad. Sci. U.S.A.">
        <title>The complete genome sequence of the Arabidopsis and tomato pathogen Pseudomonas syringae pv. tomato DC3000.</title>
        <authorList>
            <person name="Buell C.R."/>
            <person name="Joardar V."/>
            <person name="Lindeberg M."/>
            <person name="Selengut J."/>
            <person name="Paulsen I.T."/>
            <person name="Gwinn M.L."/>
            <person name="Dodson R.J."/>
            <person name="DeBoy R.T."/>
            <person name="Durkin A.S."/>
            <person name="Kolonay J.F."/>
            <person name="Madupu R."/>
            <person name="Daugherty S.C."/>
            <person name="Brinkac L.M."/>
            <person name="Beanan M.J."/>
            <person name="Haft D.H."/>
            <person name="Nelson W.C."/>
            <person name="Davidsen T.M."/>
            <person name="Zafar N."/>
            <person name="Zhou L."/>
            <person name="Liu J."/>
            <person name="Yuan Q."/>
            <person name="Khouri H.M."/>
            <person name="Fedorova N.B."/>
            <person name="Tran B."/>
            <person name="Russell D."/>
            <person name="Berry K.J."/>
            <person name="Utterback T.R."/>
            <person name="Van Aken S.E."/>
            <person name="Feldblyum T.V."/>
            <person name="D'Ascenzo M."/>
            <person name="Deng W.-L."/>
            <person name="Ramos A.R."/>
            <person name="Alfano J.R."/>
            <person name="Cartinhour S."/>
            <person name="Chatterjee A.K."/>
            <person name="Delaney T.P."/>
            <person name="Lazarowitz S.G."/>
            <person name="Martin G.B."/>
            <person name="Schneider D.J."/>
            <person name="Tang X."/>
            <person name="Bender C.L."/>
            <person name="White O."/>
            <person name="Fraser C.M."/>
            <person name="Collmer A."/>
        </authorList>
    </citation>
    <scope>NUCLEOTIDE SEQUENCE [LARGE SCALE GENOMIC DNA]</scope>
    <source>
        <strain>ATCC BAA-871 / DC3000</strain>
    </source>
</reference>
<proteinExistence type="inferred from homology"/>
<dbReference type="EC" id="4.2.1.59" evidence="1"/>
<dbReference type="EC" id="5.3.3.14" evidence="1"/>
<dbReference type="EMBL" id="AE016853">
    <property type="protein sequence ID" value="AAO55727.1"/>
    <property type="molecule type" value="Genomic_DNA"/>
</dbReference>
<dbReference type="RefSeq" id="NP_792032.1">
    <property type="nucleotide sequence ID" value="NC_004578.1"/>
</dbReference>
<dbReference type="RefSeq" id="WP_003379759.1">
    <property type="nucleotide sequence ID" value="NC_004578.1"/>
</dbReference>
<dbReference type="SMR" id="Q883Y6"/>
<dbReference type="STRING" id="223283.PSPTO_2211"/>
<dbReference type="GeneID" id="61789378"/>
<dbReference type="KEGG" id="pst:PSPTO_2211"/>
<dbReference type="PATRIC" id="fig|223283.9.peg.2243"/>
<dbReference type="eggNOG" id="COG0764">
    <property type="taxonomic scope" value="Bacteria"/>
</dbReference>
<dbReference type="HOGENOM" id="CLU_097925_0_0_6"/>
<dbReference type="OrthoDB" id="9786735at2"/>
<dbReference type="PhylomeDB" id="Q883Y6"/>
<dbReference type="UniPathway" id="UPA00094"/>
<dbReference type="Proteomes" id="UP000002515">
    <property type="component" value="Chromosome"/>
</dbReference>
<dbReference type="GO" id="GO:0005737">
    <property type="term" value="C:cytoplasm"/>
    <property type="evidence" value="ECO:0007669"/>
    <property type="project" value="UniProtKB-SubCell"/>
</dbReference>
<dbReference type="GO" id="GO:0019171">
    <property type="term" value="F:(3R)-hydroxyacyl-[acyl-carrier-protein] dehydratase activity"/>
    <property type="evidence" value="ECO:0007669"/>
    <property type="project" value="UniProtKB-UniRule"/>
</dbReference>
<dbReference type="GO" id="GO:0034017">
    <property type="term" value="F:trans-2-decenoyl-acyl-carrier-protein isomerase activity"/>
    <property type="evidence" value="ECO:0007669"/>
    <property type="project" value="UniProtKB-UniRule"/>
</dbReference>
<dbReference type="GO" id="GO:0006636">
    <property type="term" value="P:unsaturated fatty acid biosynthetic process"/>
    <property type="evidence" value="ECO:0007669"/>
    <property type="project" value="UniProtKB-UniRule"/>
</dbReference>
<dbReference type="CDD" id="cd01287">
    <property type="entry name" value="FabA"/>
    <property type="match status" value="1"/>
</dbReference>
<dbReference type="FunFam" id="3.10.129.10:FF:000003">
    <property type="entry name" value="3-hydroxydecanoyl-[acyl-carrier-protein] dehydratase"/>
    <property type="match status" value="1"/>
</dbReference>
<dbReference type="Gene3D" id="3.10.129.10">
    <property type="entry name" value="Hotdog Thioesterase"/>
    <property type="match status" value="1"/>
</dbReference>
<dbReference type="HAMAP" id="MF_00405">
    <property type="entry name" value="FabA"/>
    <property type="match status" value="1"/>
</dbReference>
<dbReference type="InterPro" id="IPR010083">
    <property type="entry name" value="FabA"/>
</dbReference>
<dbReference type="InterPro" id="IPR013114">
    <property type="entry name" value="FabA_FabZ"/>
</dbReference>
<dbReference type="InterPro" id="IPR029069">
    <property type="entry name" value="HotDog_dom_sf"/>
</dbReference>
<dbReference type="NCBIfam" id="TIGR01749">
    <property type="entry name" value="fabA"/>
    <property type="match status" value="1"/>
</dbReference>
<dbReference type="NCBIfam" id="NF003509">
    <property type="entry name" value="PRK05174.1"/>
    <property type="match status" value="1"/>
</dbReference>
<dbReference type="PANTHER" id="PTHR30272">
    <property type="entry name" value="3-HYDROXYACYL-[ACYL-CARRIER-PROTEIN] DEHYDRATASE"/>
    <property type="match status" value="1"/>
</dbReference>
<dbReference type="PANTHER" id="PTHR30272:SF8">
    <property type="entry name" value="3-HYDROXYDECANOYL-[ACYL-CARRIER-PROTEIN] DEHYDRATASE"/>
    <property type="match status" value="1"/>
</dbReference>
<dbReference type="Pfam" id="PF07977">
    <property type="entry name" value="FabA"/>
    <property type="match status" value="1"/>
</dbReference>
<dbReference type="SUPFAM" id="SSF54637">
    <property type="entry name" value="Thioesterase/thiol ester dehydrase-isomerase"/>
    <property type="match status" value="1"/>
</dbReference>
<protein>
    <recommendedName>
        <fullName evidence="1">3-hydroxydecanoyl-[acyl-carrier-protein] dehydratase</fullName>
        <ecNumber evidence="1">4.2.1.59</ecNumber>
    </recommendedName>
    <alternativeName>
        <fullName evidence="1">3-hydroxyacyl-[acyl-carrier-protein] dehydratase FabA</fullName>
    </alternativeName>
    <alternativeName>
        <fullName evidence="1">Beta-hydroxydecanoyl thioester dehydrase</fullName>
    </alternativeName>
    <alternativeName>
        <fullName evidence="1">Trans-2-decenoyl-[acyl-carrier-protein] isomerase</fullName>
        <ecNumber evidence="1">5.3.3.14</ecNumber>
    </alternativeName>
</protein>
<sequence length="171" mass="18812">MTKQHAFTREDLLRCSRGELFGPGNAQLPAPNMLMVDRITHISEEGGKFGKGELVAELDINPDLWFFACHFEGDPVMPGCLGLDAMWQLVGFYLGWQGNPGRGRALGSGEVKFFGQVLPTAKKVTYNIQIKRTMRGKLVLAIAEGTVSVDGREIYSAEGLRVGLFTSTENF</sequence>
<gene>
    <name evidence="1" type="primary">fabA</name>
    <name type="ordered locus">PSPTO_2211</name>
</gene>
<name>FABA_PSESM</name>
<keyword id="KW-0963">Cytoplasm</keyword>
<keyword id="KW-0275">Fatty acid biosynthesis</keyword>
<keyword id="KW-0276">Fatty acid metabolism</keyword>
<keyword id="KW-0413">Isomerase</keyword>
<keyword id="KW-0444">Lipid biosynthesis</keyword>
<keyword id="KW-0443">Lipid metabolism</keyword>
<keyword id="KW-0456">Lyase</keyword>
<keyword id="KW-1185">Reference proteome</keyword>
<comment type="function">
    <text evidence="1">Necessary for the introduction of cis unsaturation into fatty acids. Catalyzes the dehydration of (3R)-3-hydroxydecanoyl-ACP to E-(2)-decenoyl-ACP and then its isomerization to Z-(3)-decenoyl-ACP. Can catalyze the dehydratase reaction for beta-hydroxyacyl-ACPs with saturated chain lengths up to 16:0, being most active on intermediate chain length.</text>
</comment>
<comment type="catalytic activity">
    <reaction evidence="1">
        <text>a (3R)-hydroxyacyl-[ACP] = a (2E)-enoyl-[ACP] + H2O</text>
        <dbReference type="Rhea" id="RHEA:13097"/>
        <dbReference type="Rhea" id="RHEA-COMP:9925"/>
        <dbReference type="Rhea" id="RHEA-COMP:9945"/>
        <dbReference type="ChEBI" id="CHEBI:15377"/>
        <dbReference type="ChEBI" id="CHEBI:78784"/>
        <dbReference type="ChEBI" id="CHEBI:78827"/>
        <dbReference type="EC" id="4.2.1.59"/>
    </reaction>
</comment>
<comment type="catalytic activity">
    <reaction evidence="1">
        <text>(3R)-hydroxydecanoyl-[ACP] = (2E)-decenoyl-[ACP] + H2O</text>
        <dbReference type="Rhea" id="RHEA:41860"/>
        <dbReference type="Rhea" id="RHEA-COMP:9638"/>
        <dbReference type="Rhea" id="RHEA-COMP:9639"/>
        <dbReference type="ChEBI" id="CHEBI:15377"/>
        <dbReference type="ChEBI" id="CHEBI:78466"/>
        <dbReference type="ChEBI" id="CHEBI:78467"/>
    </reaction>
</comment>
<comment type="catalytic activity">
    <reaction evidence="1">
        <text>(2E)-decenoyl-[ACP] = (3Z)-decenoyl-[ACP]</text>
        <dbReference type="Rhea" id="RHEA:23568"/>
        <dbReference type="Rhea" id="RHEA-COMP:9639"/>
        <dbReference type="Rhea" id="RHEA-COMP:9927"/>
        <dbReference type="ChEBI" id="CHEBI:78467"/>
        <dbReference type="ChEBI" id="CHEBI:78798"/>
        <dbReference type="EC" id="5.3.3.14"/>
    </reaction>
</comment>
<comment type="pathway">
    <text evidence="1">Lipid metabolism; fatty acid biosynthesis.</text>
</comment>
<comment type="subunit">
    <text evidence="1">Homodimer.</text>
</comment>
<comment type="subcellular location">
    <subcellularLocation>
        <location evidence="1">Cytoplasm</location>
    </subcellularLocation>
</comment>
<comment type="similarity">
    <text evidence="1">Belongs to the thioester dehydratase family. FabA subfamily.</text>
</comment>
<organism>
    <name type="scientific">Pseudomonas syringae pv. tomato (strain ATCC BAA-871 / DC3000)</name>
    <dbReference type="NCBI Taxonomy" id="223283"/>
    <lineage>
        <taxon>Bacteria</taxon>
        <taxon>Pseudomonadati</taxon>
        <taxon>Pseudomonadota</taxon>
        <taxon>Gammaproteobacteria</taxon>
        <taxon>Pseudomonadales</taxon>
        <taxon>Pseudomonadaceae</taxon>
        <taxon>Pseudomonas</taxon>
    </lineage>
</organism>
<feature type="chain" id="PRO_0000091608" description="3-hydroxydecanoyl-[acyl-carrier-protein] dehydratase">
    <location>
        <begin position="1"/>
        <end position="171"/>
    </location>
</feature>
<feature type="active site" evidence="1">
    <location>
        <position position="70"/>
    </location>
</feature>